<name>PRPS1_BOVIN</name>
<reference key="1">
    <citation type="submission" date="2007-06" db="EMBL/GenBank/DDBJ databases">
        <authorList>
            <consortium name="NIH - Mammalian Gene Collection (MGC) project"/>
        </authorList>
    </citation>
    <scope>NUCLEOTIDE SEQUENCE [LARGE SCALE MRNA]</scope>
    <source>
        <strain>Hereford</strain>
        <tissue>Fetal medulla</tissue>
        <tissue>Uterus</tissue>
    </source>
</reference>
<accession>Q2HJ58</accession>
<accession>A5PKB5</accession>
<organism>
    <name type="scientific">Bos taurus</name>
    <name type="common">Bovine</name>
    <dbReference type="NCBI Taxonomy" id="9913"/>
    <lineage>
        <taxon>Eukaryota</taxon>
        <taxon>Metazoa</taxon>
        <taxon>Chordata</taxon>
        <taxon>Craniata</taxon>
        <taxon>Vertebrata</taxon>
        <taxon>Euteleostomi</taxon>
        <taxon>Mammalia</taxon>
        <taxon>Eutheria</taxon>
        <taxon>Laurasiatheria</taxon>
        <taxon>Artiodactyla</taxon>
        <taxon>Ruminantia</taxon>
        <taxon>Pecora</taxon>
        <taxon>Bovidae</taxon>
        <taxon>Bovinae</taxon>
        <taxon>Bos</taxon>
    </lineage>
</organism>
<keyword id="KW-0067">ATP-binding</keyword>
<keyword id="KW-0418">Kinase</keyword>
<keyword id="KW-0460">Magnesium</keyword>
<keyword id="KW-0479">Metal-binding</keyword>
<keyword id="KW-0545">Nucleotide biosynthesis</keyword>
<keyword id="KW-0547">Nucleotide-binding</keyword>
<keyword id="KW-1185">Reference proteome</keyword>
<keyword id="KW-0808">Transferase</keyword>
<dbReference type="EC" id="2.7.6.1"/>
<dbReference type="EMBL" id="BC113300">
    <property type="protein sequence ID" value="AAI13301.1"/>
    <property type="molecule type" value="mRNA"/>
</dbReference>
<dbReference type="EMBL" id="BC142427">
    <property type="protein sequence ID" value="AAI42428.1"/>
    <property type="molecule type" value="mRNA"/>
</dbReference>
<dbReference type="RefSeq" id="NP_001039654.1">
    <property type="nucleotide sequence ID" value="NM_001046189.2"/>
</dbReference>
<dbReference type="SMR" id="Q2HJ58"/>
<dbReference type="FunCoup" id="Q2HJ58">
    <property type="interactions" value="2192"/>
</dbReference>
<dbReference type="STRING" id="9913.ENSBTAP00000026261"/>
<dbReference type="PaxDb" id="9913-ENSBTAP00000026261"/>
<dbReference type="PeptideAtlas" id="Q2HJ58"/>
<dbReference type="GeneID" id="781227"/>
<dbReference type="KEGG" id="bta:781227"/>
<dbReference type="CTD" id="5631"/>
<dbReference type="VEuPathDB" id="HostDB:ENSBTAG00000019703"/>
<dbReference type="eggNOG" id="KOG1448">
    <property type="taxonomic scope" value="Eukaryota"/>
</dbReference>
<dbReference type="HOGENOM" id="CLU_033546_4_0_1"/>
<dbReference type="InParanoid" id="Q2HJ58"/>
<dbReference type="OMA" id="YFGWARQ"/>
<dbReference type="OrthoDB" id="413572at2759"/>
<dbReference type="TreeFam" id="TF106366"/>
<dbReference type="Reactome" id="R-BTA-73843">
    <property type="pathway name" value="5-Phosphoribose 1-diphosphate biosynthesis"/>
</dbReference>
<dbReference type="UniPathway" id="UPA00087">
    <property type="reaction ID" value="UER00172"/>
</dbReference>
<dbReference type="Proteomes" id="UP000009136">
    <property type="component" value="Chromosome X"/>
</dbReference>
<dbReference type="Bgee" id="ENSBTAG00000019703">
    <property type="expression patterns" value="Expressed in adenohypophysis and 107 other cell types or tissues"/>
</dbReference>
<dbReference type="GO" id="GO:0005737">
    <property type="term" value="C:cytoplasm"/>
    <property type="evidence" value="ECO:0000318"/>
    <property type="project" value="GO_Central"/>
</dbReference>
<dbReference type="GO" id="GO:0002189">
    <property type="term" value="C:ribose phosphate diphosphokinase complex"/>
    <property type="evidence" value="ECO:0000318"/>
    <property type="project" value="GO_Central"/>
</dbReference>
<dbReference type="GO" id="GO:0005524">
    <property type="term" value="F:ATP binding"/>
    <property type="evidence" value="ECO:0000250"/>
    <property type="project" value="UniProtKB"/>
</dbReference>
<dbReference type="GO" id="GO:0016301">
    <property type="term" value="F:kinase activity"/>
    <property type="evidence" value="ECO:0007669"/>
    <property type="project" value="UniProtKB-KW"/>
</dbReference>
<dbReference type="GO" id="GO:0000287">
    <property type="term" value="F:magnesium ion binding"/>
    <property type="evidence" value="ECO:0007669"/>
    <property type="project" value="InterPro"/>
</dbReference>
<dbReference type="GO" id="GO:0042803">
    <property type="term" value="F:protein homodimerization activity"/>
    <property type="evidence" value="ECO:0000250"/>
    <property type="project" value="UniProtKB"/>
</dbReference>
<dbReference type="GO" id="GO:0004749">
    <property type="term" value="F:ribose phosphate diphosphokinase activity"/>
    <property type="evidence" value="ECO:0000250"/>
    <property type="project" value="UniProtKB"/>
</dbReference>
<dbReference type="GO" id="GO:0006015">
    <property type="term" value="P:5-phosphoribose 1-diphosphate biosynthetic process"/>
    <property type="evidence" value="ECO:0000318"/>
    <property type="project" value="GO_Central"/>
</dbReference>
<dbReference type="GO" id="GO:0006164">
    <property type="term" value="P:purine nucleotide biosynthetic process"/>
    <property type="evidence" value="ECO:0000318"/>
    <property type="project" value="GO_Central"/>
</dbReference>
<dbReference type="GO" id="GO:0009156">
    <property type="term" value="P:ribonucleoside monophosphate biosynthetic process"/>
    <property type="evidence" value="ECO:0007669"/>
    <property type="project" value="InterPro"/>
</dbReference>
<dbReference type="CDD" id="cd06223">
    <property type="entry name" value="PRTases_typeI"/>
    <property type="match status" value="1"/>
</dbReference>
<dbReference type="FunFam" id="3.40.50.2020:FF:000031">
    <property type="entry name" value="Probable PRS4-ribose-phosphate pyrophosphokinase 3"/>
    <property type="match status" value="1"/>
</dbReference>
<dbReference type="FunFam" id="3.40.50.2020:FF:000005">
    <property type="entry name" value="Ribose-phosphate pyrophosphokinase 1"/>
    <property type="match status" value="1"/>
</dbReference>
<dbReference type="Gene3D" id="3.40.50.2020">
    <property type="match status" value="2"/>
</dbReference>
<dbReference type="HAMAP" id="MF_00583_B">
    <property type="entry name" value="RibP_PPkinase_B"/>
    <property type="match status" value="1"/>
</dbReference>
<dbReference type="InterPro" id="IPR000842">
    <property type="entry name" value="PRib_PP_synth_CS"/>
</dbReference>
<dbReference type="InterPro" id="IPR029099">
    <property type="entry name" value="Pribosyltran_N"/>
</dbReference>
<dbReference type="InterPro" id="IPR000836">
    <property type="entry name" value="PRibTrfase_dom"/>
</dbReference>
<dbReference type="InterPro" id="IPR029057">
    <property type="entry name" value="PRTase-like"/>
</dbReference>
<dbReference type="InterPro" id="IPR005946">
    <property type="entry name" value="Rib-P_diPkinase"/>
</dbReference>
<dbReference type="InterPro" id="IPR037515">
    <property type="entry name" value="Rib-P_diPkinase_bac"/>
</dbReference>
<dbReference type="NCBIfam" id="NF002320">
    <property type="entry name" value="PRK01259.1"/>
    <property type="match status" value="1"/>
</dbReference>
<dbReference type="NCBIfam" id="TIGR01251">
    <property type="entry name" value="ribP_PPkin"/>
    <property type="match status" value="1"/>
</dbReference>
<dbReference type="PANTHER" id="PTHR10210">
    <property type="entry name" value="RIBOSE-PHOSPHATE DIPHOSPHOKINASE FAMILY MEMBER"/>
    <property type="match status" value="1"/>
</dbReference>
<dbReference type="PANTHER" id="PTHR10210:SF118">
    <property type="entry name" value="RIBOSE-PHOSPHATE PYROPHOSPHOKINASE 1"/>
    <property type="match status" value="1"/>
</dbReference>
<dbReference type="Pfam" id="PF14572">
    <property type="entry name" value="Pribosyl_synth"/>
    <property type="match status" value="1"/>
</dbReference>
<dbReference type="Pfam" id="PF13793">
    <property type="entry name" value="Pribosyltran_N"/>
    <property type="match status" value="1"/>
</dbReference>
<dbReference type="SMART" id="SM01400">
    <property type="entry name" value="Pribosyltran_N"/>
    <property type="match status" value="1"/>
</dbReference>
<dbReference type="SUPFAM" id="SSF53271">
    <property type="entry name" value="PRTase-like"/>
    <property type="match status" value="1"/>
</dbReference>
<dbReference type="PROSITE" id="PS00114">
    <property type="entry name" value="PRPP_SYNTHASE"/>
    <property type="match status" value="1"/>
</dbReference>
<comment type="function">
    <text>Catalyzes the synthesis of phosphoribosylpyrophosphate (PRPP) that is essential for nucleotide synthesis.</text>
</comment>
<comment type="catalytic activity">
    <reaction>
        <text>D-ribose 5-phosphate + ATP = 5-phospho-alpha-D-ribose 1-diphosphate + AMP + H(+)</text>
        <dbReference type="Rhea" id="RHEA:15609"/>
        <dbReference type="ChEBI" id="CHEBI:15378"/>
        <dbReference type="ChEBI" id="CHEBI:30616"/>
        <dbReference type="ChEBI" id="CHEBI:58017"/>
        <dbReference type="ChEBI" id="CHEBI:78346"/>
        <dbReference type="ChEBI" id="CHEBI:456215"/>
        <dbReference type="EC" id="2.7.6.1"/>
    </reaction>
</comment>
<comment type="cofactor">
    <cofactor evidence="1">
        <name>Mg(2+)</name>
        <dbReference type="ChEBI" id="CHEBI:18420"/>
    </cofactor>
</comment>
<comment type="activity regulation">
    <text>Activated by magnesium and inorganic phosphate.</text>
</comment>
<comment type="pathway">
    <text>Metabolic intermediate biosynthesis; 5-phospho-alpha-D-ribose 1-diphosphate biosynthesis; 5-phospho-alpha-D-ribose 1-diphosphate from D-ribose 5-phosphate (route I): step 1/1.</text>
</comment>
<comment type="subunit">
    <text evidence="1">Homodimer. The active form is probably a hexamer composed of 3 homodimers (By similarity).</text>
</comment>
<comment type="similarity">
    <text evidence="3">Belongs to the ribose-phosphate pyrophosphokinase family.</text>
</comment>
<protein>
    <recommendedName>
        <fullName>Ribose-phosphate pyrophosphokinase 1</fullName>
        <ecNumber>2.7.6.1</ecNumber>
    </recommendedName>
    <alternativeName>
        <fullName>Phosphoribosyl pyrophosphate synthase I</fullName>
        <shortName>PRS-I</shortName>
    </alternativeName>
</protein>
<gene>
    <name type="primary">PRPS1</name>
</gene>
<evidence type="ECO:0000250" key="1"/>
<evidence type="ECO:0000255" key="2"/>
<evidence type="ECO:0000305" key="3"/>
<sequence length="318" mass="34834">MPNIKIFSGSSHQDLSQKIADRLGLELGKVVTKKFSNQETCVEIGESVRGEDVYIVQSGCGEINDNLMELLIMINACKIASASRVTAVIPCFPYARQDKKDKSRAPISAKLVANMLSVAGADHIITMDLHASQIQGFFDIPVDNLYAEPAVLKWIRENISEWRNCTIVSPDAGGAKRVTSIADRLNVDFALIHKERKKANEVDRMVLVGDVKDRVAILVDDMADTCGTICHAADKLLSAGATRVYAILTHGIFSGPAISRINNACFEAVVVTNTIPQEDKMKHCSKIQVIDISMILAEAIRRTHNGESVSYLFSHVPL</sequence>
<proteinExistence type="evidence at transcript level"/>
<feature type="chain" id="PRO_0000244988" description="Ribose-phosphate pyrophosphokinase 1">
    <location>
        <begin position="1"/>
        <end position="318"/>
    </location>
</feature>
<feature type="region of interest" description="Binding of phosphoribosylpyrophosphate" evidence="2">
    <location>
        <begin position="212"/>
        <end position="227"/>
    </location>
</feature>
<feature type="binding site" evidence="1">
    <location>
        <begin position="96"/>
        <end position="101"/>
    </location>
    <ligand>
        <name>ATP</name>
        <dbReference type="ChEBI" id="CHEBI:30616"/>
    </ligand>
</feature>
<feature type="binding site" evidence="2">
    <location>
        <position position="128"/>
    </location>
    <ligand>
        <name>Mg(2+)</name>
        <dbReference type="ChEBI" id="CHEBI:18420"/>
    </ligand>
</feature>
<feature type="binding site" evidence="1">
    <location>
        <position position="130"/>
    </location>
    <ligand>
        <name>ATP</name>
        <dbReference type="ChEBI" id="CHEBI:30616"/>
    </ligand>
</feature>
<feature type="binding site" evidence="2">
    <location>
        <position position="130"/>
    </location>
    <ligand>
        <name>Mg(2+)</name>
        <dbReference type="ChEBI" id="CHEBI:18420"/>
    </ligand>
</feature>
<feature type="binding site" evidence="2">
    <location>
        <position position="139"/>
    </location>
    <ligand>
        <name>Mg(2+)</name>
        <dbReference type="ChEBI" id="CHEBI:18420"/>
    </ligand>
</feature>
<feature type="binding site" evidence="2">
    <location>
        <position position="143"/>
    </location>
    <ligand>
        <name>Mg(2+)</name>
        <dbReference type="ChEBI" id="CHEBI:18420"/>
    </ligand>
</feature>